<reference key="1">
    <citation type="journal article" date="2006" name="Proc. Natl. Acad. Sci. U.S.A.">
        <title>Genome analysis of the smallest free-living eukaryote Ostreococcus tauri unveils many unique features.</title>
        <authorList>
            <person name="Derelle E."/>
            <person name="Ferraz C."/>
            <person name="Rombauts S."/>
            <person name="Rouze P."/>
            <person name="Worden A.Z."/>
            <person name="Robbens S."/>
            <person name="Partensky F."/>
            <person name="Degroeve S."/>
            <person name="Echeynie S."/>
            <person name="Cooke R."/>
            <person name="Saeys Y."/>
            <person name="Wuyts J."/>
            <person name="Jabbari K."/>
            <person name="Bowler C."/>
            <person name="Panaud O."/>
            <person name="Piegu B."/>
            <person name="Ball S.G."/>
            <person name="Ral J.-P."/>
            <person name="Bouget F.-Y."/>
            <person name="Piganeau G."/>
            <person name="De Baets B."/>
            <person name="Picard A."/>
            <person name="Delseny M."/>
            <person name="Demaille J."/>
            <person name="Van de Peer Y."/>
            <person name="Moreau H."/>
        </authorList>
    </citation>
    <scope>NUCLEOTIDE SEQUENCE [LARGE SCALE GENOMIC DNA]</scope>
    <source>
        <strain>OTTH0595</strain>
    </source>
</reference>
<feature type="chain" id="PRO_0000371602" description="Small ribosomal subunit protein uS2">
    <location>
        <begin position="1"/>
        <end position="287"/>
    </location>
</feature>
<feature type="region of interest" description="Disordered" evidence="2">
    <location>
        <begin position="249"/>
        <end position="287"/>
    </location>
</feature>
<name>RSSA_OSTTA</name>
<protein>
    <recommendedName>
        <fullName evidence="1">Small ribosomal subunit protein uS2</fullName>
    </recommendedName>
    <alternativeName>
        <fullName evidence="3">40S ribosomal protein SA</fullName>
    </alternativeName>
</protein>
<comment type="function">
    <text evidence="1">Required for the assembly and/or stability of the 40S ribosomal subunit. Required for the processing of the 20S rRNA-precursor to mature 18S rRNA in a late step of the maturation of 40S ribosomal subunits.</text>
</comment>
<comment type="subunit">
    <text evidence="1">Component of the small ribosomal subunit. Mature ribosomes consist of a small (40S) and a large (60S) subunit. The 40S subunit contains about 33 different proteins and 1 molecule of RNA (18S). The 60S subunit contains about 49 different proteins and 3 molecules of RNA (25S, 5.8S and 5S). Interacts with ribosomal protein S21.</text>
</comment>
<comment type="subcellular location">
    <subcellularLocation>
        <location evidence="1">Cytoplasm</location>
    </subcellularLocation>
</comment>
<comment type="similarity">
    <text evidence="1">Belongs to the universal ribosomal protein uS2 family.</text>
</comment>
<organism>
    <name type="scientific">Ostreococcus tauri</name>
    <dbReference type="NCBI Taxonomy" id="70448"/>
    <lineage>
        <taxon>Eukaryota</taxon>
        <taxon>Viridiplantae</taxon>
        <taxon>Chlorophyta</taxon>
        <taxon>Mamiellophyceae</taxon>
        <taxon>Mamiellales</taxon>
        <taxon>Bathycoccaceae</taxon>
        <taxon>Ostreococcus</taxon>
    </lineage>
</organism>
<accession>Q01CH5</accession>
<accession>A0A090M3C2</accession>
<keyword id="KW-0963">Cytoplasm</keyword>
<keyword id="KW-1185">Reference proteome</keyword>
<keyword id="KW-0687">Ribonucleoprotein</keyword>
<keyword id="KW-0689">Ribosomal protein</keyword>
<sequence length="287" mass="30977">MAPQMSQKEADIAMMLAAGCHLGTKNVDFQMERYVWKRRADGIHIINLGKTWDKLMLAARVIVAVENPQDVIAQAARPYGQRAVLKFAQYTGAKALAGRHTPGTYTNQKDAVFAEPRVLVVTDPRTDAQPISETAFVNIPTIAFCDTDSPLKNVDIAIPANNKAKQSIGCLYYLLARMVLQMRGTISPANPWDVMVDLFFYRDPEELEAKEQEEEETAAAAAAPAADAGYNAVADAAYGAESWDDQAGAGFGAQAGNWSEAPAPTGWDAQQGGDFGQGFGAMPPQGY</sequence>
<dbReference type="EMBL" id="CAID01000003">
    <property type="protein sequence ID" value="CEF97172.1"/>
    <property type="molecule type" value="Genomic_DNA"/>
</dbReference>
<dbReference type="SMR" id="Q01CH5"/>
<dbReference type="FunCoup" id="Q01CH5">
    <property type="interactions" value="1564"/>
</dbReference>
<dbReference type="STRING" id="70448.Q01CH5"/>
<dbReference type="eggNOG" id="KOG0830">
    <property type="taxonomic scope" value="Eukaryota"/>
</dbReference>
<dbReference type="InParanoid" id="Q01CH5"/>
<dbReference type="OrthoDB" id="414863at2759"/>
<dbReference type="Proteomes" id="UP000009170">
    <property type="component" value="Chromosome 3"/>
</dbReference>
<dbReference type="GO" id="GO:0022627">
    <property type="term" value="C:cytosolic small ribosomal subunit"/>
    <property type="evidence" value="ECO:0007669"/>
    <property type="project" value="UniProtKB-UniRule"/>
</dbReference>
<dbReference type="GO" id="GO:0003735">
    <property type="term" value="F:structural constituent of ribosome"/>
    <property type="evidence" value="ECO:0007669"/>
    <property type="project" value="UniProtKB-UniRule"/>
</dbReference>
<dbReference type="GO" id="GO:0000028">
    <property type="term" value="P:ribosomal small subunit assembly"/>
    <property type="evidence" value="ECO:0007669"/>
    <property type="project" value="UniProtKB-UniRule"/>
</dbReference>
<dbReference type="GO" id="GO:0006412">
    <property type="term" value="P:translation"/>
    <property type="evidence" value="ECO:0007669"/>
    <property type="project" value="UniProtKB-UniRule"/>
</dbReference>
<dbReference type="CDD" id="cd01425">
    <property type="entry name" value="RPS2"/>
    <property type="match status" value="1"/>
</dbReference>
<dbReference type="FunFam" id="3.40.50.10490:FF:000017">
    <property type="entry name" value="40S ribosomal protein SA"/>
    <property type="match status" value="1"/>
</dbReference>
<dbReference type="Gene3D" id="3.40.50.10490">
    <property type="entry name" value="Glucose-6-phosphate isomerase like protein, domain 1"/>
    <property type="match status" value="1"/>
</dbReference>
<dbReference type="HAMAP" id="MF_03015">
    <property type="entry name" value="Ribosomal_S2_euk"/>
    <property type="match status" value="1"/>
</dbReference>
<dbReference type="InterPro" id="IPR001865">
    <property type="entry name" value="Ribosomal_uS2"/>
</dbReference>
<dbReference type="InterPro" id="IPR032281">
    <property type="entry name" value="Ribosomal_uS2_C"/>
</dbReference>
<dbReference type="InterPro" id="IPR018130">
    <property type="entry name" value="Ribosomal_uS2_CS"/>
</dbReference>
<dbReference type="InterPro" id="IPR027498">
    <property type="entry name" value="Ribosomal_uS2_euk"/>
</dbReference>
<dbReference type="InterPro" id="IPR005707">
    <property type="entry name" value="Ribosomal_uS2_euk/arc"/>
</dbReference>
<dbReference type="InterPro" id="IPR023591">
    <property type="entry name" value="Ribosomal_uS2_flav_dom_sf"/>
</dbReference>
<dbReference type="NCBIfam" id="TIGR01012">
    <property type="entry name" value="uS2_euk_arch"/>
    <property type="match status" value="1"/>
</dbReference>
<dbReference type="PANTHER" id="PTHR11489">
    <property type="entry name" value="40S RIBOSOMAL PROTEIN SA"/>
    <property type="match status" value="1"/>
</dbReference>
<dbReference type="Pfam" id="PF16122">
    <property type="entry name" value="40S_SA_C"/>
    <property type="match status" value="1"/>
</dbReference>
<dbReference type="Pfam" id="PF00318">
    <property type="entry name" value="Ribosomal_S2"/>
    <property type="match status" value="2"/>
</dbReference>
<dbReference type="PRINTS" id="PR00395">
    <property type="entry name" value="RIBOSOMALS2"/>
</dbReference>
<dbReference type="SUPFAM" id="SSF52313">
    <property type="entry name" value="Ribosomal protein S2"/>
    <property type="match status" value="1"/>
</dbReference>
<dbReference type="PROSITE" id="PS00963">
    <property type="entry name" value="RIBOSOMAL_S2_2"/>
    <property type="match status" value="1"/>
</dbReference>
<evidence type="ECO:0000255" key="1">
    <source>
        <dbReference type="HAMAP-Rule" id="MF_03015"/>
    </source>
</evidence>
<evidence type="ECO:0000256" key="2">
    <source>
        <dbReference type="SAM" id="MobiDB-lite"/>
    </source>
</evidence>
<evidence type="ECO:0000305" key="3"/>
<evidence type="ECO:0000312" key="4">
    <source>
        <dbReference type="EMBL" id="CEF97172.1"/>
    </source>
</evidence>
<proteinExistence type="inferred from homology"/>
<gene>
    <name evidence="4" type="ordered locus">Ot03g03240</name>
</gene>